<name>RLME_ACIBY</name>
<gene>
    <name evidence="1" type="primary">rlmE</name>
    <name evidence="1" type="synonym">ftsJ</name>
    <name evidence="1" type="synonym">rrmJ</name>
    <name type="ordered locus">ABAYE0805</name>
</gene>
<feature type="chain" id="PRO_1000194970" description="Ribosomal RNA large subunit methyltransferase E">
    <location>
        <begin position="1"/>
        <end position="216"/>
    </location>
</feature>
<feature type="active site" description="Proton acceptor" evidence="1">
    <location>
        <position position="168"/>
    </location>
</feature>
<feature type="binding site" evidence="1">
    <location>
        <position position="67"/>
    </location>
    <ligand>
        <name>S-adenosyl-L-methionine</name>
        <dbReference type="ChEBI" id="CHEBI:59789"/>
    </ligand>
</feature>
<feature type="binding site" evidence="1">
    <location>
        <position position="69"/>
    </location>
    <ligand>
        <name>S-adenosyl-L-methionine</name>
        <dbReference type="ChEBI" id="CHEBI:59789"/>
    </ligand>
</feature>
<feature type="binding site" evidence="1">
    <location>
        <position position="87"/>
    </location>
    <ligand>
        <name>S-adenosyl-L-methionine</name>
        <dbReference type="ChEBI" id="CHEBI:59789"/>
    </ligand>
</feature>
<feature type="binding site" evidence="1">
    <location>
        <position position="103"/>
    </location>
    <ligand>
        <name>S-adenosyl-L-methionine</name>
        <dbReference type="ChEBI" id="CHEBI:59789"/>
    </ligand>
</feature>
<feature type="binding site" evidence="1">
    <location>
        <position position="128"/>
    </location>
    <ligand>
        <name>S-adenosyl-L-methionine</name>
        <dbReference type="ChEBI" id="CHEBI:59789"/>
    </ligand>
</feature>
<proteinExistence type="inferred from homology"/>
<keyword id="KW-0963">Cytoplasm</keyword>
<keyword id="KW-0489">Methyltransferase</keyword>
<keyword id="KW-0698">rRNA processing</keyword>
<keyword id="KW-0949">S-adenosyl-L-methionine</keyword>
<keyword id="KW-0808">Transferase</keyword>
<dbReference type="EC" id="2.1.1.166" evidence="1"/>
<dbReference type="EMBL" id="CU459141">
    <property type="protein sequence ID" value="CAM85759.1"/>
    <property type="molecule type" value="Genomic_DNA"/>
</dbReference>
<dbReference type="RefSeq" id="WP_000235573.1">
    <property type="nucleotide sequence ID" value="NZ_JBDGFB010000030.1"/>
</dbReference>
<dbReference type="SMR" id="B0VEE9"/>
<dbReference type="EnsemblBacteria" id="CAM85759">
    <property type="protein sequence ID" value="CAM85759"/>
    <property type="gene ID" value="ABAYE0805"/>
</dbReference>
<dbReference type="GeneID" id="92894959"/>
<dbReference type="KEGG" id="aby:ABAYE0805"/>
<dbReference type="HOGENOM" id="CLU_009422_4_0_6"/>
<dbReference type="GO" id="GO:0005737">
    <property type="term" value="C:cytoplasm"/>
    <property type="evidence" value="ECO:0007669"/>
    <property type="project" value="UniProtKB-SubCell"/>
</dbReference>
<dbReference type="GO" id="GO:0008650">
    <property type="term" value="F:rRNA (uridine-2'-O-)-methyltransferase activity"/>
    <property type="evidence" value="ECO:0007669"/>
    <property type="project" value="UniProtKB-UniRule"/>
</dbReference>
<dbReference type="FunFam" id="3.40.50.150:FF:000005">
    <property type="entry name" value="Ribosomal RNA large subunit methyltransferase E"/>
    <property type="match status" value="1"/>
</dbReference>
<dbReference type="Gene3D" id="3.40.50.150">
    <property type="entry name" value="Vaccinia Virus protein VP39"/>
    <property type="match status" value="1"/>
</dbReference>
<dbReference type="HAMAP" id="MF_01547">
    <property type="entry name" value="RNA_methyltr_E"/>
    <property type="match status" value="1"/>
</dbReference>
<dbReference type="InterPro" id="IPR050082">
    <property type="entry name" value="RNA_methyltr_RlmE"/>
</dbReference>
<dbReference type="InterPro" id="IPR002877">
    <property type="entry name" value="RNA_MeTrfase_FtsJ_dom"/>
</dbReference>
<dbReference type="InterPro" id="IPR015507">
    <property type="entry name" value="rRNA-MeTfrase_E"/>
</dbReference>
<dbReference type="InterPro" id="IPR029063">
    <property type="entry name" value="SAM-dependent_MTases_sf"/>
</dbReference>
<dbReference type="NCBIfam" id="NF008390">
    <property type="entry name" value="PRK11188.1"/>
    <property type="match status" value="1"/>
</dbReference>
<dbReference type="PANTHER" id="PTHR10920">
    <property type="entry name" value="RIBOSOMAL RNA METHYLTRANSFERASE"/>
    <property type="match status" value="1"/>
</dbReference>
<dbReference type="PANTHER" id="PTHR10920:SF18">
    <property type="entry name" value="RRNA METHYLTRANSFERASE 2, MITOCHONDRIAL"/>
    <property type="match status" value="1"/>
</dbReference>
<dbReference type="Pfam" id="PF01728">
    <property type="entry name" value="FtsJ"/>
    <property type="match status" value="1"/>
</dbReference>
<dbReference type="PIRSF" id="PIRSF005461">
    <property type="entry name" value="23S_rRNA_mtase"/>
    <property type="match status" value="1"/>
</dbReference>
<dbReference type="SUPFAM" id="SSF53335">
    <property type="entry name" value="S-adenosyl-L-methionine-dependent methyltransferases"/>
    <property type="match status" value="1"/>
</dbReference>
<protein>
    <recommendedName>
        <fullName evidence="1">Ribosomal RNA large subunit methyltransferase E</fullName>
        <ecNumber evidence="1">2.1.1.166</ecNumber>
    </recommendedName>
    <alternativeName>
        <fullName evidence="1">23S rRNA Um2552 methyltransferase</fullName>
    </alternativeName>
    <alternativeName>
        <fullName evidence="1">rRNA (uridine-2'-O-)-methyltransferase</fullName>
    </alternativeName>
</protein>
<comment type="function">
    <text evidence="1">Specifically methylates the uridine in position 2552 of 23S rRNA at the 2'-O position of the ribose in the fully assembled 50S ribosomal subunit.</text>
</comment>
<comment type="catalytic activity">
    <reaction evidence="1">
        <text>uridine(2552) in 23S rRNA + S-adenosyl-L-methionine = 2'-O-methyluridine(2552) in 23S rRNA + S-adenosyl-L-homocysteine + H(+)</text>
        <dbReference type="Rhea" id="RHEA:42720"/>
        <dbReference type="Rhea" id="RHEA-COMP:10202"/>
        <dbReference type="Rhea" id="RHEA-COMP:10203"/>
        <dbReference type="ChEBI" id="CHEBI:15378"/>
        <dbReference type="ChEBI" id="CHEBI:57856"/>
        <dbReference type="ChEBI" id="CHEBI:59789"/>
        <dbReference type="ChEBI" id="CHEBI:65315"/>
        <dbReference type="ChEBI" id="CHEBI:74478"/>
        <dbReference type="EC" id="2.1.1.166"/>
    </reaction>
</comment>
<comment type="subcellular location">
    <subcellularLocation>
        <location evidence="1">Cytoplasm</location>
    </subcellularLocation>
</comment>
<comment type="similarity">
    <text evidence="1">Belongs to the class I-like SAM-binding methyltransferase superfamily. RNA methyltransferase RlmE family.</text>
</comment>
<evidence type="ECO:0000255" key="1">
    <source>
        <dbReference type="HAMAP-Rule" id="MF_01547"/>
    </source>
</evidence>
<reference key="1">
    <citation type="journal article" date="2008" name="PLoS ONE">
        <title>Comparative analysis of Acinetobacters: three genomes for three lifestyles.</title>
        <authorList>
            <person name="Vallenet D."/>
            <person name="Nordmann P."/>
            <person name="Barbe V."/>
            <person name="Poirel L."/>
            <person name="Mangenot S."/>
            <person name="Bataille E."/>
            <person name="Dossat C."/>
            <person name="Gas S."/>
            <person name="Kreimeyer A."/>
            <person name="Lenoble P."/>
            <person name="Oztas S."/>
            <person name="Poulain J."/>
            <person name="Segurens B."/>
            <person name="Robert C."/>
            <person name="Abergel C."/>
            <person name="Claverie J.-M."/>
            <person name="Raoult D."/>
            <person name="Medigue C."/>
            <person name="Weissenbach J."/>
            <person name="Cruveiller S."/>
        </authorList>
    </citation>
    <scope>NUCLEOTIDE SEQUENCE [LARGE SCALE GENOMIC DNA]</scope>
    <source>
        <strain>AYE</strain>
    </source>
</reference>
<sequence length="216" mass="23927">MATRITNQKLSKSSRAWMREHLDDPFVKKAQKEGYRARAAYKLLEIQEKYKLIKPGMTVVDLGAAPGSWSQIAGKLVGSKGLVIASDILPMDALPDVTFLQGDFREEAVFEKLLNILNGRQVDIVISDMAPNTSGNRAVDQPRQIYLCELALDFAQKVLGPNGQFVVKVFQGAGFDEFRKQVVDSFDVLKTAKPAASRARSKEVFLVGQGRKKALQ</sequence>
<organism>
    <name type="scientific">Acinetobacter baumannii (strain AYE)</name>
    <dbReference type="NCBI Taxonomy" id="509173"/>
    <lineage>
        <taxon>Bacteria</taxon>
        <taxon>Pseudomonadati</taxon>
        <taxon>Pseudomonadota</taxon>
        <taxon>Gammaproteobacteria</taxon>
        <taxon>Moraxellales</taxon>
        <taxon>Moraxellaceae</taxon>
        <taxon>Acinetobacter</taxon>
        <taxon>Acinetobacter calcoaceticus/baumannii complex</taxon>
    </lineage>
</organism>
<accession>B0VEE9</accession>